<dbReference type="EMBL" id="X91488">
    <property type="protein sequence ID" value="CAA62767.1"/>
    <property type="molecule type" value="Genomic_DNA"/>
</dbReference>
<dbReference type="EMBL" id="X95569">
    <property type="protein sequence ID" value="CAA64815.1"/>
    <property type="molecule type" value="Genomic_DNA"/>
</dbReference>
<dbReference type="EMBL" id="Z73108">
    <property type="protein sequence ID" value="CAA97446.1"/>
    <property type="molecule type" value="Genomic_DNA"/>
</dbReference>
<dbReference type="EMBL" id="BK006945">
    <property type="protein sequence ID" value="DAA09316.1"/>
    <property type="molecule type" value="Genomic_DNA"/>
</dbReference>
<dbReference type="PIR" id="S64745">
    <property type="entry name" value="S64745"/>
</dbReference>
<dbReference type="RefSeq" id="NP_013098.1">
    <property type="nucleotide sequence ID" value="NM_001181823.1"/>
</dbReference>
<dbReference type="PDB" id="2DOQ">
    <property type="method" value="X-ray"/>
    <property type="resolution" value="3.00 A"/>
    <property type="chains" value="D=218-306"/>
</dbReference>
<dbReference type="PDB" id="2GV5">
    <property type="method" value="X-ray"/>
    <property type="resolution" value="3.00 A"/>
    <property type="chains" value="C/F=643-710"/>
</dbReference>
<dbReference type="PDBsum" id="2DOQ"/>
<dbReference type="PDBsum" id="2GV5"/>
<dbReference type="SMR" id="Q12369"/>
<dbReference type="BioGRID" id="31248">
    <property type="interactions" value="98"/>
</dbReference>
<dbReference type="DIP" id="DIP-8950N"/>
<dbReference type="FunCoup" id="Q12369">
    <property type="interactions" value="233"/>
</dbReference>
<dbReference type="IntAct" id="Q12369">
    <property type="interactions" value="8"/>
</dbReference>
<dbReference type="MINT" id="Q12369"/>
<dbReference type="STRING" id="4932.YLL003W"/>
<dbReference type="iPTMnet" id="Q12369"/>
<dbReference type="PaxDb" id="4932-YLL003W"/>
<dbReference type="PeptideAtlas" id="Q12369"/>
<dbReference type="EnsemblFungi" id="YLL003W_mRNA">
    <property type="protein sequence ID" value="YLL003W"/>
    <property type="gene ID" value="YLL003W"/>
</dbReference>
<dbReference type="GeneID" id="850657"/>
<dbReference type="KEGG" id="sce:YLL003W"/>
<dbReference type="AGR" id="SGD:S000003926"/>
<dbReference type="SGD" id="S000003926">
    <property type="gene designation" value="SFI1"/>
</dbReference>
<dbReference type="VEuPathDB" id="FungiDB:YLL003W"/>
<dbReference type="eggNOG" id="KOG4775">
    <property type="taxonomic scope" value="Eukaryota"/>
</dbReference>
<dbReference type="HOGENOM" id="CLU_304658_0_0_1"/>
<dbReference type="InParanoid" id="Q12369"/>
<dbReference type="OMA" id="WDRATVR"/>
<dbReference type="OrthoDB" id="4070448at2759"/>
<dbReference type="BioCyc" id="YEAST:G3O-32108-MONOMER"/>
<dbReference type="BioGRID-ORCS" id="850657">
    <property type="hits" value="0 hits in 10 CRISPR screens"/>
</dbReference>
<dbReference type="CD-CODE" id="876000F7">
    <property type="entry name" value="Centrosome"/>
</dbReference>
<dbReference type="PRO" id="PR:Q12369"/>
<dbReference type="Proteomes" id="UP000002311">
    <property type="component" value="Chromosome XII"/>
</dbReference>
<dbReference type="RNAct" id="Q12369">
    <property type="molecule type" value="protein"/>
</dbReference>
<dbReference type="GO" id="GO:0005737">
    <property type="term" value="C:cytoplasm"/>
    <property type="evidence" value="ECO:0007669"/>
    <property type="project" value="UniProtKB-KW"/>
</dbReference>
<dbReference type="GO" id="GO:0005825">
    <property type="term" value="C:half bridge of spindle pole body"/>
    <property type="evidence" value="ECO:0000314"/>
    <property type="project" value="SGD"/>
</dbReference>
<dbReference type="GO" id="GO:0000922">
    <property type="term" value="C:spindle pole"/>
    <property type="evidence" value="ECO:0007669"/>
    <property type="project" value="UniProtKB-SubCell"/>
</dbReference>
<dbReference type="GO" id="GO:0051301">
    <property type="term" value="P:cell division"/>
    <property type="evidence" value="ECO:0007669"/>
    <property type="project" value="UniProtKB-KW"/>
</dbReference>
<dbReference type="GO" id="GO:0000086">
    <property type="term" value="P:G2/M transition of mitotic cell cycle"/>
    <property type="evidence" value="ECO:0000315"/>
    <property type="project" value="SGD"/>
</dbReference>
<dbReference type="GO" id="GO:0051225">
    <property type="term" value="P:spindle assembly"/>
    <property type="evidence" value="ECO:0000315"/>
    <property type="project" value="SGD"/>
</dbReference>
<dbReference type="GO" id="GO:0030474">
    <property type="term" value="P:spindle pole body duplication"/>
    <property type="evidence" value="ECO:0000315"/>
    <property type="project" value="SGD"/>
</dbReference>
<dbReference type="CDD" id="cd23506">
    <property type="entry name" value="Sfi1p_helix"/>
    <property type="match status" value="1"/>
</dbReference>
<dbReference type="Gene3D" id="1.20.5.1760">
    <property type="match status" value="1"/>
</dbReference>
<dbReference type="Gene3D" id="6.10.250.1000">
    <property type="match status" value="1"/>
</dbReference>
<dbReference type="InterPro" id="IPR013665">
    <property type="entry name" value="Sfi1_dom"/>
</dbReference>
<dbReference type="InterPro" id="IPR018907">
    <property type="entry name" value="Spindle_body_associated_C_dom"/>
</dbReference>
<dbReference type="Pfam" id="PF08457">
    <property type="entry name" value="Sfi1"/>
    <property type="match status" value="1"/>
</dbReference>
<dbReference type="Pfam" id="PF10638">
    <property type="entry name" value="Sfi1_C"/>
    <property type="match status" value="1"/>
</dbReference>
<keyword id="KW-0002">3D-structure</keyword>
<keyword id="KW-0131">Cell cycle</keyword>
<keyword id="KW-0132">Cell division</keyword>
<keyword id="KW-0963">Cytoplasm</keyword>
<keyword id="KW-0206">Cytoskeleton</keyword>
<keyword id="KW-0498">Mitosis</keyword>
<keyword id="KW-0597">Phosphoprotein</keyword>
<keyword id="KW-1185">Reference proteome</keyword>
<accession>Q12369</accession>
<accession>D6VY00</accession>
<comment type="function">
    <text evidence="2 3 5">Component of the spindle pole body (SPB) half-bridge involved in the initial steps of SPB duplication.</text>
</comment>
<comment type="subunit">
    <text evidence="3 5">Forms a complex with CDC31 and interacts with SPC110. Associates with the spindle pole body half bridge.</text>
</comment>
<comment type="interaction">
    <interactant intactId="EBI-2213082">
        <id>Q12369</id>
    </interactant>
    <interactant intactId="EBI-4259">
        <id>P06704</id>
        <label>CDC31</label>
    </interactant>
    <organismsDiffer>false</organismsDiffer>
    <experiments>3</experiments>
</comment>
<comment type="subcellular location">
    <subcellularLocation>
        <location evidence="3 4">Cytoplasm</location>
        <location evidence="3 4">Cytoskeleton</location>
        <location evidence="3 4">Spindle pole</location>
    </subcellularLocation>
    <text evidence="3">Spindle pole, half bridge.</text>
</comment>
<comment type="similarity">
    <text evidence="6">Belongs to the SFI1 family.</text>
</comment>
<feature type="chain" id="PRO_0000269647" description="Protein SFI1">
    <location>
        <begin position="1"/>
        <end position="946"/>
    </location>
</feature>
<feature type="region of interest" description="Disordered" evidence="1">
    <location>
        <begin position="846"/>
        <end position="901"/>
    </location>
</feature>
<feature type="region of interest" description="Disordered" evidence="1">
    <location>
        <begin position="917"/>
        <end position="946"/>
    </location>
</feature>
<feature type="compositionally biased region" description="Polar residues" evidence="1">
    <location>
        <begin position="857"/>
        <end position="883"/>
    </location>
</feature>
<feature type="compositionally biased region" description="Basic and acidic residues" evidence="1">
    <location>
        <begin position="926"/>
        <end position="940"/>
    </location>
</feature>
<feature type="modified residue" description="Phosphoserine" evidence="8">
    <location>
        <position position="10"/>
    </location>
</feature>
<feature type="modified residue" description="Phosphoserine" evidence="7">
    <location>
        <position position="855"/>
    </location>
</feature>
<feature type="helix" evidence="9">
    <location>
        <begin position="222"/>
        <end position="240"/>
    </location>
</feature>
<feature type="helix" evidence="9">
    <location>
        <begin position="241"/>
        <end position="245"/>
    </location>
</feature>
<feature type="helix" evidence="9">
    <location>
        <begin position="247"/>
        <end position="294"/>
    </location>
</feature>
<feature type="helix" evidence="10">
    <location>
        <begin position="643"/>
        <end position="675"/>
    </location>
</feature>
<feature type="helix" evidence="10">
    <location>
        <begin position="677"/>
        <end position="706"/>
    </location>
</feature>
<feature type="turn" evidence="10">
    <location>
        <begin position="707"/>
        <end position="709"/>
    </location>
</feature>
<reference key="1">
    <citation type="journal article" date="1996" name="Yeast">
        <title>Sequence analysis of the CEN12 region of Saccharomyces cerevisiae on a 43.7 kb fragment of chromosome XII including an open reading frame homologous to the human cystic fibrosis transmembrane conductance regulator protein CFTR.</title>
        <authorList>
            <person name="Miosga T."/>
            <person name="Zimmermann F.K."/>
        </authorList>
    </citation>
    <scope>NUCLEOTIDE SEQUENCE [GENOMIC DNA]</scope>
    <source>
        <strain>ATCC 90840 / EAY235 / FY23</strain>
    </source>
</reference>
<reference key="2">
    <citation type="journal article" date="1999" name="Yeast">
        <title>Deletion of SFI1, a novel suppressor of partial Ras-cAMP pathway deficiency in the yeast Saccharomyces cerevisiae, causes G(2) arrest.</title>
        <authorList>
            <person name="Ma P."/>
            <person name="Winderickx J."/>
            <person name="Nauwelaers D."/>
            <person name="Dumortier F."/>
            <person name="De Doncker A."/>
            <person name="Thevelein J.M."/>
            <person name="Van Dijck P."/>
        </authorList>
    </citation>
    <scope>NUCLEOTIDE SEQUENCE [GENOMIC DNA]</scope>
    <scope>FUNCTION</scope>
</reference>
<reference key="3">
    <citation type="journal article" date="1997" name="Nature">
        <title>The nucleotide sequence of Saccharomyces cerevisiae chromosome XII.</title>
        <authorList>
            <person name="Johnston M."/>
            <person name="Hillier L.W."/>
            <person name="Riles L."/>
            <person name="Albermann K."/>
            <person name="Andre B."/>
            <person name="Ansorge W."/>
            <person name="Benes V."/>
            <person name="Brueckner M."/>
            <person name="Delius H."/>
            <person name="Dubois E."/>
            <person name="Duesterhoeft A."/>
            <person name="Entian K.-D."/>
            <person name="Floeth M."/>
            <person name="Goffeau A."/>
            <person name="Hebling U."/>
            <person name="Heumann K."/>
            <person name="Heuss-Neitzel D."/>
            <person name="Hilbert H."/>
            <person name="Hilger F."/>
            <person name="Kleine K."/>
            <person name="Koetter P."/>
            <person name="Louis E.J."/>
            <person name="Messenguy F."/>
            <person name="Mewes H.-W."/>
            <person name="Miosga T."/>
            <person name="Moestl D."/>
            <person name="Mueller-Auer S."/>
            <person name="Nentwich U."/>
            <person name="Obermaier B."/>
            <person name="Piravandi E."/>
            <person name="Pohl T.M."/>
            <person name="Portetelle D."/>
            <person name="Purnelle B."/>
            <person name="Rechmann S."/>
            <person name="Rieger M."/>
            <person name="Rinke M."/>
            <person name="Rose M."/>
            <person name="Scharfe M."/>
            <person name="Scherens B."/>
            <person name="Scholler P."/>
            <person name="Schwager C."/>
            <person name="Schwarz S."/>
            <person name="Underwood A.P."/>
            <person name="Urrestarazu L.A."/>
            <person name="Vandenbol M."/>
            <person name="Verhasselt P."/>
            <person name="Vierendeels F."/>
            <person name="Voet M."/>
            <person name="Volckaert G."/>
            <person name="Voss H."/>
            <person name="Wambutt R."/>
            <person name="Wedler E."/>
            <person name="Wedler H."/>
            <person name="Zimmermann F.K."/>
            <person name="Zollner A."/>
            <person name="Hani J."/>
            <person name="Hoheisel J.D."/>
        </authorList>
    </citation>
    <scope>NUCLEOTIDE SEQUENCE [LARGE SCALE GENOMIC DNA]</scope>
    <source>
        <strain>ATCC 204508 / S288c</strain>
    </source>
</reference>
<reference key="4">
    <citation type="journal article" date="2014" name="G3 (Bethesda)">
        <title>The reference genome sequence of Saccharomyces cerevisiae: Then and now.</title>
        <authorList>
            <person name="Engel S.R."/>
            <person name="Dietrich F.S."/>
            <person name="Fisk D.G."/>
            <person name="Binkley G."/>
            <person name="Balakrishnan R."/>
            <person name="Costanzo M.C."/>
            <person name="Dwight S.S."/>
            <person name="Hitz B.C."/>
            <person name="Karra K."/>
            <person name="Nash R.S."/>
            <person name="Weng S."/>
            <person name="Wong E.D."/>
            <person name="Lloyd P."/>
            <person name="Skrzypek M.S."/>
            <person name="Miyasato S.R."/>
            <person name="Simison M."/>
            <person name="Cherry J.M."/>
        </authorList>
    </citation>
    <scope>GENOME REANNOTATION</scope>
    <source>
        <strain>ATCC 204508 / S288c</strain>
    </source>
</reference>
<reference key="5">
    <citation type="journal article" date="2003" name="J. Cell Biol.">
        <title>Sfi1p has conserved centrin-binding sites and an essential function in budding yeast spindle pole body duplication.</title>
        <authorList>
            <person name="Kilmartin J.V."/>
        </authorList>
    </citation>
    <scope>FUNCTION</scope>
    <scope>SUBCELLULAR LOCATION</scope>
    <scope>INTERACTION WITH CDC31 AND SPC110</scope>
</reference>
<reference key="6">
    <citation type="journal article" date="2003" name="Nature">
        <title>Global analysis of protein localization in budding yeast.</title>
        <authorList>
            <person name="Huh W.-K."/>
            <person name="Falvo J.V."/>
            <person name="Gerke L.C."/>
            <person name="Carroll A.S."/>
            <person name="Howson R.W."/>
            <person name="Weissman J.S."/>
            <person name="O'Shea E.K."/>
        </authorList>
    </citation>
    <scope>SUBCELLULAR LOCATION [LARGE SCALE ANALYSIS]</scope>
</reference>
<reference key="7">
    <citation type="journal article" date="2007" name="Proc. Natl. Acad. Sci. U.S.A.">
        <title>Analysis of phosphorylation sites on proteins from Saccharomyces cerevisiae by electron transfer dissociation (ETD) mass spectrometry.</title>
        <authorList>
            <person name="Chi A."/>
            <person name="Huttenhower C."/>
            <person name="Geer L.Y."/>
            <person name="Coon J.J."/>
            <person name="Syka J.E.P."/>
            <person name="Bai D.L."/>
            <person name="Shabanowitz J."/>
            <person name="Burke D.J."/>
            <person name="Troyanskaya O.G."/>
            <person name="Hunt D.F."/>
        </authorList>
    </citation>
    <scope>PHOSPHORYLATION [LARGE SCALE ANALYSIS] AT SER-855</scope>
    <scope>IDENTIFICATION BY MASS SPECTROMETRY [LARGE SCALE ANALYSIS]</scope>
</reference>
<reference key="8">
    <citation type="journal article" date="2008" name="Mol. Cell. Proteomics">
        <title>A multidimensional chromatography technology for in-depth phosphoproteome analysis.</title>
        <authorList>
            <person name="Albuquerque C.P."/>
            <person name="Smolka M.B."/>
            <person name="Payne S.H."/>
            <person name="Bafna V."/>
            <person name="Eng J."/>
            <person name="Zhou H."/>
        </authorList>
    </citation>
    <scope>IDENTIFICATION BY MASS SPECTROMETRY [LARGE SCALE ANALYSIS]</scope>
</reference>
<reference key="9">
    <citation type="journal article" date="2009" name="Science">
        <title>Global analysis of Cdk1 substrate phosphorylation sites provides insights into evolution.</title>
        <authorList>
            <person name="Holt L.J."/>
            <person name="Tuch B.B."/>
            <person name="Villen J."/>
            <person name="Johnson A.D."/>
            <person name="Gygi S.P."/>
            <person name="Morgan D.O."/>
        </authorList>
    </citation>
    <scope>PHOSPHORYLATION [LARGE SCALE ANALYSIS] AT SER-10</scope>
    <scope>IDENTIFICATION BY MASS SPECTROMETRY [LARGE SCALE ANALYSIS]</scope>
</reference>
<reference key="10">
    <citation type="journal article" date="2006" name="J. Cell Biol.">
        <title>Structural role of Sfi1p-centrin filaments in budding yeast spindle pole body duplication.</title>
        <authorList>
            <person name="Li S."/>
            <person name="Sandercock A.M."/>
            <person name="Conduit P."/>
            <person name="Robinson C.V."/>
            <person name="Williams R.L."/>
            <person name="Kilmartin J.V."/>
        </authorList>
    </citation>
    <scope>X-RAY CRYSTALLOGRAPHY (3.0 ANGSTROMS) OF 218-306 AND 643-710 IN COMPLEX WITH CDC31</scope>
    <scope>FUNCTION</scope>
</reference>
<gene>
    <name type="primary">SFI1</name>
    <name type="ordered locus">YLL003W</name>
    <name type="ORF">L1373</name>
</gene>
<evidence type="ECO:0000256" key="1">
    <source>
        <dbReference type="SAM" id="MobiDB-lite"/>
    </source>
</evidence>
<evidence type="ECO:0000269" key="2">
    <source>
    </source>
</evidence>
<evidence type="ECO:0000269" key="3">
    <source>
    </source>
</evidence>
<evidence type="ECO:0000269" key="4">
    <source>
    </source>
</evidence>
<evidence type="ECO:0000269" key="5">
    <source>
    </source>
</evidence>
<evidence type="ECO:0000305" key="6"/>
<evidence type="ECO:0007744" key="7">
    <source>
    </source>
</evidence>
<evidence type="ECO:0007744" key="8">
    <source>
    </source>
</evidence>
<evidence type="ECO:0007829" key="9">
    <source>
        <dbReference type="PDB" id="2DOQ"/>
    </source>
</evidence>
<evidence type="ECO:0007829" key="10">
    <source>
        <dbReference type="PDB" id="2GV5"/>
    </source>
</evidence>
<organism>
    <name type="scientific">Saccharomyces cerevisiae (strain ATCC 204508 / S288c)</name>
    <name type="common">Baker's yeast</name>
    <dbReference type="NCBI Taxonomy" id="559292"/>
    <lineage>
        <taxon>Eukaryota</taxon>
        <taxon>Fungi</taxon>
        <taxon>Dikarya</taxon>
        <taxon>Ascomycota</taxon>
        <taxon>Saccharomycotina</taxon>
        <taxon>Saccharomycetes</taxon>
        <taxon>Saccharomycetales</taxon>
        <taxon>Saccharomycetaceae</taxon>
        <taxon>Saccharomyces</taxon>
    </lineage>
</organism>
<sequence>MGKFGTTNKSTENLLRDKFVPETSPTNIPTDVLIKQGQITDSTESLIHGGAERYIVNALKPIELNKTEGFFEDPPFHLPSPPVDSTNLEYEDVTDLPKNGLRYDLNDISVEVIEDLYRQIEAFLVHFKLSRSFLQIFKNYVNILIQEGINPLRDEYFTILEDELKGFFTFNSVIEEILEIFLIHPRNKFIALSLAEYTYAKNKIRRHFNHWKTVCELNEEANRFANQAKLRVQEAVFYIWSDKTLKYSQMANDEAESFRNTWLLFRSFQQWITLTQTLKEQSRLADQAFLNKMFRKILKAQEHWKHLETVNTDNIKKIFLRTTFHIWKLRHKEINYHGLERRIFERIKQKVINYEYNKSIAEKVRSFSLQRKYLNKWEKKNIENEDKLGALYELENKFIKQKFFRKLNRSFQHSQQEAIAKSKLNQTLLRCVFEKMWLKRFEDHLHLYSIVSLKEANLVKRIFHSWKKLLYIDLKASDYSRTNLLKSSLRSWKLEVKLKIFEQKCKKSIQASAYRTWRKRIQYGKISSEHVKTAFCAKYLGVWKRRMLQMNSMNDEASKFYEEGLVNECLAIWKERLIKTKELEDRYNFLCKTHAILTVKRTLMHIDNVHLLYTKLAPSMDRVKLSKAFLKWRKATRFKVRHKLNDILHVYEKSKERELQSQLFNAWRNRFCFYTEECNIQAISKRNYQLEKMVLKKFRERLLEIVKSEELADEVREEFVLVKTFYIWKTHLDEIFYMSTLLEQSEANKQFIITSKFLKMWSLRFLKIKRNDETVEVFRHRWDRATVRGLLLLWKNRSDSSPKRRKDFNLKHELKTPIRSDSQNASTIPGSERIKQHRMEAMKSHYSRARRAIPSPVKSSSVLDSTAKKQINLESTTGLNGSPTRGKPLRYSPRRTTRNMPSKVDHIDFGRIPAVPFSLSANSPKIDQDMDYIREHDKSPLSRKRQ</sequence>
<proteinExistence type="evidence at protein level"/>
<protein>
    <recommendedName>
        <fullName>Protein SFI1</fullName>
    </recommendedName>
    <alternativeName>
        <fullName>Suppressor of fermentation induced loss of stress resistance protein 1</fullName>
    </alternativeName>
</protein>
<name>SFI1_YEAST</name>